<dbReference type="EC" id="2.7.7.6" evidence="1"/>
<dbReference type="EMBL" id="AE016823">
    <property type="protein sequence ID" value="AAS69370.1"/>
    <property type="molecule type" value="Genomic_DNA"/>
</dbReference>
<dbReference type="RefSeq" id="WP_000274334.1">
    <property type="nucleotide sequence ID" value="NC_005823.1"/>
</dbReference>
<dbReference type="SMR" id="Q72UA8"/>
<dbReference type="GeneID" id="61144093"/>
<dbReference type="KEGG" id="lic:LIC_10753"/>
<dbReference type="HOGENOM" id="CLU_000524_4_3_12"/>
<dbReference type="Proteomes" id="UP000007037">
    <property type="component" value="Chromosome I"/>
</dbReference>
<dbReference type="GO" id="GO:0000428">
    <property type="term" value="C:DNA-directed RNA polymerase complex"/>
    <property type="evidence" value="ECO:0007669"/>
    <property type="project" value="UniProtKB-KW"/>
</dbReference>
<dbReference type="GO" id="GO:0003677">
    <property type="term" value="F:DNA binding"/>
    <property type="evidence" value="ECO:0007669"/>
    <property type="project" value="UniProtKB-UniRule"/>
</dbReference>
<dbReference type="GO" id="GO:0003899">
    <property type="term" value="F:DNA-directed RNA polymerase activity"/>
    <property type="evidence" value="ECO:0007669"/>
    <property type="project" value="UniProtKB-UniRule"/>
</dbReference>
<dbReference type="GO" id="GO:0032549">
    <property type="term" value="F:ribonucleoside binding"/>
    <property type="evidence" value="ECO:0007669"/>
    <property type="project" value="InterPro"/>
</dbReference>
<dbReference type="GO" id="GO:0006351">
    <property type="term" value="P:DNA-templated transcription"/>
    <property type="evidence" value="ECO:0007669"/>
    <property type="project" value="UniProtKB-UniRule"/>
</dbReference>
<dbReference type="CDD" id="cd00653">
    <property type="entry name" value="RNA_pol_B_RPB2"/>
    <property type="match status" value="1"/>
</dbReference>
<dbReference type="Gene3D" id="2.40.50.100">
    <property type="match status" value="2"/>
</dbReference>
<dbReference type="Gene3D" id="2.40.50.150">
    <property type="match status" value="1"/>
</dbReference>
<dbReference type="Gene3D" id="3.90.1100.10">
    <property type="match status" value="1"/>
</dbReference>
<dbReference type="Gene3D" id="2.30.150.10">
    <property type="entry name" value="DNA-directed RNA polymerase, beta subunit, external 1 domain"/>
    <property type="match status" value="1"/>
</dbReference>
<dbReference type="Gene3D" id="2.40.270.10">
    <property type="entry name" value="DNA-directed RNA polymerase, subunit 2, domain 6"/>
    <property type="match status" value="1"/>
</dbReference>
<dbReference type="Gene3D" id="3.90.1800.10">
    <property type="entry name" value="RNA polymerase alpha subunit dimerisation domain"/>
    <property type="match status" value="1"/>
</dbReference>
<dbReference type="Gene3D" id="3.90.1110.10">
    <property type="entry name" value="RNA polymerase Rpb2, domain 2"/>
    <property type="match status" value="1"/>
</dbReference>
<dbReference type="HAMAP" id="MF_01321">
    <property type="entry name" value="RNApol_bact_RpoB"/>
    <property type="match status" value="1"/>
</dbReference>
<dbReference type="InterPro" id="IPR042107">
    <property type="entry name" value="DNA-dir_RNA_pol_bsu_ext_1_sf"/>
</dbReference>
<dbReference type="InterPro" id="IPR019462">
    <property type="entry name" value="DNA-dir_RNA_pol_bsu_external_1"/>
</dbReference>
<dbReference type="InterPro" id="IPR015712">
    <property type="entry name" value="DNA-dir_RNA_pol_su2"/>
</dbReference>
<dbReference type="InterPro" id="IPR007120">
    <property type="entry name" value="DNA-dir_RNAP_su2_dom"/>
</dbReference>
<dbReference type="InterPro" id="IPR037033">
    <property type="entry name" value="DNA-dir_RNAP_su2_hyb_sf"/>
</dbReference>
<dbReference type="InterPro" id="IPR010243">
    <property type="entry name" value="RNA_pol_bsu_bac"/>
</dbReference>
<dbReference type="InterPro" id="IPR007121">
    <property type="entry name" value="RNA_pol_bsu_CS"/>
</dbReference>
<dbReference type="InterPro" id="IPR007644">
    <property type="entry name" value="RNA_pol_bsu_protrusion"/>
</dbReference>
<dbReference type="InterPro" id="IPR007642">
    <property type="entry name" value="RNA_pol_Rpb2_2"/>
</dbReference>
<dbReference type="InterPro" id="IPR037034">
    <property type="entry name" value="RNA_pol_Rpb2_2_sf"/>
</dbReference>
<dbReference type="InterPro" id="IPR007645">
    <property type="entry name" value="RNA_pol_Rpb2_3"/>
</dbReference>
<dbReference type="InterPro" id="IPR007641">
    <property type="entry name" value="RNA_pol_Rpb2_7"/>
</dbReference>
<dbReference type="InterPro" id="IPR014724">
    <property type="entry name" value="RNA_pol_RPB2_OB-fold"/>
</dbReference>
<dbReference type="NCBIfam" id="TIGR02013">
    <property type="entry name" value="rpoB"/>
    <property type="match status" value="1"/>
</dbReference>
<dbReference type="PANTHER" id="PTHR20856">
    <property type="entry name" value="DNA-DIRECTED RNA POLYMERASE I SUBUNIT 2"/>
    <property type="match status" value="1"/>
</dbReference>
<dbReference type="Pfam" id="PF04563">
    <property type="entry name" value="RNA_pol_Rpb2_1"/>
    <property type="match status" value="1"/>
</dbReference>
<dbReference type="Pfam" id="PF04561">
    <property type="entry name" value="RNA_pol_Rpb2_2"/>
    <property type="match status" value="1"/>
</dbReference>
<dbReference type="Pfam" id="PF04565">
    <property type="entry name" value="RNA_pol_Rpb2_3"/>
    <property type="match status" value="1"/>
</dbReference>
<dbReference type="Pfam" id="PF10385">
    <property type="entry name" value="RNA_pol_Rpb2_45"/>
    <property type="match status" value="1"/>
</dbReference>
<dbReference type="Pfam" id="PF00562">
    <property type="entry name" value="RNA_pol_Rpb2_6"/>
    <property type="match status" value="1"/>
</dbReference>
<dbReference type="Pfam" id="PF04560">
    <property type="entry name" value="RNA_pol_Rpb2_7"/>
    <property type="match status" value="1"/>
</dbReference>
<dbReference type="SUPFAM" id="SSF64484">
    <property type="entry name" value="beta and beta-prime subunits of DNA dependent RNA-polymerase"/>
    <property type="match status" value="1"/>
</dbReference>
<dbReference type="PROSITE" id="PS01166">
    <property type="entry name" value="RNA_POL_BETA"/>
    <property type="match status" value="1"/>
</dbReference>
<proteinExistence type="inferred from homology"/>
<keyword id="KW-0240">DNA-directed RNA polymerase</keyword>
<keyword id="KW-0548">Nucleotidyltransferase</keyword>
<keyword id="KW-0804">Transcription</keyword>
<keyword id="KW-0808">Transferase</keyword>
<sequence>MYGQVERKRVNFGKITNLDYLPNLIQIQKRSFDWFLQADVKDETKRRHQGLEAVFRETFPIESPNNDMIMEYSHYILGEPKRSPQECKDTDATFAMPLKAVIRLIIKETGEIREQTVYMGDLPVMTEQGTFIINGAERVVVSQLHRSPGIFFSYDMERDVFSARVIPYRGSWLEFEMDNKGILIAKIDRKKKFPATLLVKSLGHGTNEEVLRLFYSSKKEKIAGATSKDLKKILGRRTINDIINMETGEVMLEAGSKINEDNISILKEMKVKEVELIEFPKGKDNPILINALEKDGVNDYEDAILKFHSLMRQGEPSTIENATTELTRLFFSPKTFDLGEVGRYKINSKFEFNNPKEFSGEKSRVLRPADIIETVRYILNLFSETENYYPDDIDHLGNRRIRSVGELISNQLKTGFSRVERVIKERMTVQEIETQTPQLLISIKPITAVINEFFGSSQLSQFMDQTNPLAELTHKRRLNALGPGGLSRDRAGMEVRDVHYSHYGRMCPIETPEGPNIGLILSMSSYARVNDYGFLETPYRTVKNGKVTGQIEHLTADKEEYHYIAQASGVIDEKGELKNKLISTRHRGDFPFRNPSEIQYMDLAPLQVVSVSTALIPFLEHDDANRALMGSNMQRQAVPLLREEAPFVGTGMETRAAYDSRICIVNKHDGVVTSVDAENIVVERKGGKESDTYQLTKFKKTNQGTCFNQKPIVGVVHSEINGKVSKVSKEKIEVTGENGELKEYVLQIGSKQYSPIVSAGEEVKRGSTLAGQVVVGEKLDEMGNILVKGTVLADGPAVDNGVLALGRNVLAAFMPWEGYNFEDAILISERIVRDDVFSSIHIEEFEIQARETKLGPEQITRDIPNLSDKAFRDLDETGVIRIGAEVKPGDILVGMVTPKGETDLTPEYKLLHSIFGEKAKDVRDSSLRMPNGFEGTVIDIKRFSRENQDELPAGVEEMVKVFVARKRKLLVGDKMAGRHGNKGVVARVMAEEDMPYMEDGTPLDIVLNPLGVPSRMNLGQIFETQLGFAASKLGISFETPVFDGAEESDVDNFCKEANLPLNSKFKLYDGRTGLPFMNEVFCGYIYILKLAHLVEDKIHARSTGPYSLVTQQPLGGKAQFGGQRLGEMEVWALEAYGASHTLQELLTIKSDDMLGRARIYEAIVKGIHSIKPGIPESFNVLVQELRGLALDIIITDSEGNTVDISDYEDEYSKSKKKIKFETIENA</sequence>
<protein>
    <recommendedName>
        <fullName evidence="1">DNA-directed RNA polymerase subunit beta</fullName>
        <shortName evidence="1">RNAP subunit beta</shortName>
        <ecNumber evidence="1">2.7.7.6</ecNumber>
    </recommendedName>
    <alternativeName>
        <fullName evidence="1">RNA polymerase subunit beta</fullName>
    </alternativeName>
    <alternativeName>
        <fullName evidence="1">Transcriptase subunit beta</fullName>
    </alternativeName>
</protein>
<accession>Q72UA8</accession>
<organism>
    <name type="scientific">Leptospira interrogans serogroup Icterohaemorrhagiae serovar copenhageni (strain Fiocruz L1-130)</name>
    <dbReference type="NCBI Taxonomy" id="267671"/>
    <lineage>
        <taxon>Bacteria</taxon>
        <taxon>Pseudomonadati</taxon>
        <taxon>Spirochaetota</taxon>
        <taxon>Spirochaetia</taxon>
        <taxon>Leptospirales</taxon>
        <taxon>Leptospiraceae</taxon>
        <taxon>Leptospira</taxon>
    </lineage>
</organism>
<comment type="function">
    <text evidence="1">DNA-dependent RNA polymerase catalyzes the transcription of DNA into RNA using the four ribonucleoside triphosphates as substrates.</text>
</comment>
<comment type="catalytic activity">
    <reaction evidence="1">
        <text>RNA(n) + a ribonucleoside 5'-triphosphate = RNA(n+1) + diphosphate</text>
        <dbReference type="Rhea" id="RHEA:21248"/>
        <dbReference type="Rhea" id="RHEA-COMP:14527"/>
        <dbReference type="Rhea" id="RHEA-COMP:17342"/>
        <dbReference type="ChEBI" id="CHEBI:33019"/>
        <dbReference type="ChEBI" id="CHEBI:61557"/>
        <dbReference type="ChEBI" id="CHEBI:140395"/>
        <dbReference type="EC" id="2.7.7.6"/>
    </reaction>
</comment>
<comment type="subunit">
    <text evidence="1">The RNAP catalytic core consists of 2 alpha, 1 beta, 1 beta' and 1 omega subunit. When a sigma factor is associated with the core the holoenzyme is formed, which can initiate transcription.</text>
</comment>
<comment type="similarity">
    <text evidence="1">Belongs to the RNA polymerase beta chain family.</text>
</comment>
<feature type="chain" id="PRO_0000047911" description="DNA-directed RNA polymerase subunit beta">
    <location>
        <begin position="1"/>
        <end position="1226"/>
    </location>
</feature>
<gene>
    <name evidence="1" type="primary">rpoB</name>
    <name type="ordered locus">LIC_10753</name>
</gene>
<evidence type="ECO:0000255" key="1">
    <source>
        <dbReference type="HAMAP-Rule" id="MF_01321"/>
    </source>
</evidence>
<reference key="1">
    <citation type="journal article" date="2004" name="J. Bacteriol.">
        <title>Comparative genomics of two Leptospira interrogans serovars reveals novel insights into physiology and pathogenesis.</title>
        <authorList>
            <person name="Nascimento A.L.T.O."/>
            <person name="Ko A.I."/>
            <person name="Martins E.A.L."/>
            <person name="Monteiro-Vitorello C.B."/>
            <person name="Ho P.L."/>
            <person name="Haake D.A."/>
            <person name="Verjovski-Almeida S."/>
            <person name="Hartskeerl R.A."/>
            <person name="Marques M.V."/>
            <person name="Oliveira M.C."/>
            <person name="Menck C.F.M."/>
            <person name="Leite L.C.C."/>
            <person name="Carrer H."/>
            <person name="Coutinho L.L."/>
            <person name="Degrave W.M."/>
            <person name="Dellagostin O.A."/>
            <person name="El-Dorry H."/>
            <person name="Ferro E.S."/>
            <person name="Ferro M.I.T."/>
            <person name="Furlan L.R."/>
            <person name="Gamberini M."/>
            <person name="Giglioti E.A."/>
            <person name="Goes-Neto A."/>
            <person name="Goldman G.H."/>
            <person name="Goldman M.H.S."/>
            <person name="Harakava R."/>
            <person name="Jeronimo S.M.B."/>
            <person name="Junqueira-de-Azevedo I.L.M."/>
            <person name="Kimura E.T."/>
            <person name="Kuramae E.E."/>
            <person name="Lemos E.G.M."/>
            <person name="Lemos M.V.F."/>
            <person name="Marino C.L."/>
            <person name="Nunes L.R."/>
            <person name="de Oliveira R.C."/>
            <person name="Pereira G.G."/>
            <person name="Reis M.S."/>
            <person name="Schriefer A."/>
            <person name="Siqueira W.J."/>
            <person name="Sommer P."/>
            <person name="Tsai S.M."/>
            <person name="Simpson A.J.G."/>
            <person name="Ferro J.A."/>
            <person name="Camargo L.E.A."/>
            <person name="Kitajima J.P."/>
            <person name="Setubal J.C."/>
            <person name="Van Sluys M.A."/>
        </authorList>
    </citation>
    <scope>NUCLEOTIDE SEQUENCE [LARGE SCALE GENOMIC DNA]</scope>
    <source>
        <strain>Fiocruz L1-130</strain>
    </source>
</reference>
<name>RPOB_LEPIC</name>